<dbReference type="EC" id="2.1.1.199" evidence="1"/>
<dbReference type="EMBL" id="CP000753">
    <property type="protein sequence ID" value="ABS06562.1"/>
    <property type="molecule type" value="Genomic_DNA"/>
</dbReference>
<dbReference type="RefSeq" id="WP_006079886.1">
    <property type="nucleotide sequence ID" value="NC_009665.1"/>
</dbReference>
<dbReference type="SMR" id="A6WIC3"/>
<dbReference type="GeneID" id="11770743"/>
<dbReference type="KEGG" id="sbm:Shew185_0393"/>
<dbReference type="HOGENOM" id="CLU_038422_2_0_6"/>
<dbReference type="GO" id="GO:0005737">
    <property type="term" value="C:cytoplasm"/>
    <property type="evidence" value="ECO:0007669"/>
    <property type="project" value="UniProtKB-SubCell"/>
</dbReference>
<dbReference type="GO" id="GO:0071424">
    <property type="term" value="F:rRNA (cytosine-N4-)-methyltransferase activity"/>
    <property type="evidence" value="ECO:0007669"/>
    <property type="project" value="UniProtKB-UniRule"/>
</dbReference>
<dbReference type="GO" id="GO:0070475">
    <property type="term" value="P:rRNA base methylation"/>
    <property type="evidence" value="ECO:0007669"/>
    <property type="project" value="UniProtKB-UniRule"/>
</dbReference>
<dbReference type="FunFam" id="1.10.150.170:FF:000001">
    <property type="entry name" value="Ribosomal RNA small subunit methyltransferase H"/>
    <property type="match status" value="1"/>
</dbReference>
<dbReference type="Gene3D" id="1.10.150.170">
    <property type="entry name" value="Putative methyltransferase TM0872, insert domain"/>
    <property type="match status" value="1"/>
</dbReference>
<dbReference type="Gene3D" id="3.40.50.150">
    <property type="entry name" value="Vaccinia Virus protein VP39"/>
    <property type="match status" value="1"/>
</dbReference>
<dbReference type="HAMAP" id="MF_01007">
    <property type="entry name" value="16SrRNA_methyltr_H"/>
    <property type="match status" value="1"/>
</dbReference>
<dbReference type="InterPro" id="IPR002903">
    <property type="entry name" value="RsmH"/>
</dbReference>
<dbReference type="InterPro" id="IPR023397">
    <property type="entry name" value="SAM-dep_MeTrfase_MraW_recog"/>
</dbReference>
<dbReference type="InterPro" id="IPR029063">
    <property type="entry name" value="SAM-dependent_MTases_sf"/>
</dbReference>
<dbReference type="NCBIfam" id="TIGR00006">
    <property type="entry name" value="16S rRNA (cytosine(1402)-N(4))-methyltransferase RsmH"/>
    <property type="match status" value="1"/>
</dbReference>
<dbReference type="PANTHER" id="PTHR11265:SF0">
    <property type="entry name" value="12S RRNA N4-METHYLCYTIDINE METHYLTRANSFERASE"/>
    <property type="match status" value="1"/>
</dbReference>
<dbReference type="PANTHER" id="PTHR11265">
    <property type="entry name" value="S-ADENOSYL-METHYLTRANSFERASE MRAW"/>
    <property type="match status" value="1"/>
</dbReference>
<dbReference type="Pfam" id="PF01795">
    <property type="entry name" value="Methyltransf_5"/>
    <property type="match status" value="1"/>
</dbReference>
<dbReference type="PIRSF" id="PIRSF004486">
    <property type="entry name" value="MraW"/>
    <property type="match status" value="1"/>
</dbReference>
<dbReference type="SUPFAM" id="SSF81799">
    <property type="entry name" value="Putative methyltransferase TM0872, insert domain"/>
    <property type="match status" value="1"/>
</dbReference>
<dbReference type="SUPFAM" id="SSF53335">
    <property type="entry name" value="S-adenosyl-L-methionine-dependent methyltransferases"/>
    <property type="match status" value="1"/>
</dbReference>
<proteinExistence type="inferred from homology"/>
<keyword id="KW-0963">Cytoplasm</keyword>
<keyword id="KW-0489">Methyltransferase</keyword>
<keyword id="KW-0698">rRNA processing</keyword>
<keyword id="KW-0949">S-adenosyl-L-methionine</keyword>
<keyword id="KW-0808">Transferase</keyword>
<reference key="1">
    <citation type="submission" date="2007-07" db="EMBL/GenBank/DDBJ databases">
        <title>Complete sequence of chromosome of Shewanella baltica OS185.</title>
        <authorList>
            <consortium name="US DOE Joint Genome Institute"/>
            <person name="Copeland A."/>
            <person name="Lucas S."/>
            <person name="Lapidus A."/>
            <person name="Barry K."/>
            <person name="Glavina del Rio T."/>
            <person name="Dalin E."/>
            <person name="Tice H."/>
            <person name="Pitluck S."/>
            <person name="Sims D."/>
            <person name="Brettin T."/>
            <person name="Bruce D."/>
            <person name="Detter J.C."/>
            <person name="Han C."/>
            <person name="Schmutz J."/>
            <person name="Larimer F."/>
            <person name="Land M."/>
            <person name="Hauser L."/>
            <person name="Kyrpides N."/>
            <person name="Mikhailova N."/>
            <person name="Brettar I."/>
            <person name="Rodrigues J."/>
            <person name="Konstantinidis K."/>
            <person name="Tiedje J."/>
            <person name="Richardson P."/>
        </authorList>
    </citation>
    <scope>NUCLEOTIDE SEQUENCE [LARGE SCALE GENOMIC DNA]</scope>
    <source>
        <strain>OS185</strain>
    </source>
</reference>
<protein>
    <recommendedName>
        <fullName evidence="1">Ribosomal RNA small subunit methyltransferase H</fullName>
        <ecNumber evidence="1">2.1.1.199</ecNumber>
    </recommendedName>
    <alternativeName>
        <fullName evidence="1">16S rRNA m(4)C1402 methyltransferase</fullName>
    </alternativeName>
    <alternativeName>
        <fullName evidence="1">rRNA (cytosine-N(4)-)-methyltransferase RsmH</fullName>
    </alternativeName>
</protein>
<sequence>MSQEFAHLSVLLAETVGGLNIKDDGIYIDGTFGRGGHSRQVLQQLGENGRLIAIDRDPQAIEAAKQFADDPRFQIVHGGFGQLADYVEELGLVGKIDGVLLDLGVSSPQLDDAERGFSFMRDGPLDMRMDNSQGQTAAQWLARAEIEDMAWVFKTYGEEKNARHIARCIAADRDKTPFLRTKDLADLIARITKSKERNKHPATRVFQAIRIYINSELDQIDQALEGAVNVLAPQGRLSVISFHSLEDRIVKRFIRRHSQGESVPHGFPVTEDQINKSRKLRAVGKAIMPSDEEIERNARARSSVLRIAERLDY</sequence>
<organism>
    <name type="scientific">Shewanella baltica (strain OS185)</name>
    <dbReference type="NCBI Taxonomy" id="402882"/>
    <lineage>
        <taxon>Bacteria</taxon>
        <taxon>Pseudomonadati</taxon>
        <taxon>Pseudomonadota</taxon>
        <taxon>Gammaproteobacteria</taxon>
        <taxon>Alteromonadales</taxon>
        <taxon>Shewanellaceae</taxon>
        <taxon>Shewanella</taxon>
    </lineage>
</organism>
<feature type="chain" id="PRO_0000387111" description="Ribosomal RNA small subunit methyltransferase H">
    <location>
        <begin position="1"/>
        <end position="313"/>
    </location>
</feature>
<feature type="binding site" evidence="1">
    <location>
        <begin position="35"/>
        <end position="37"/>
    </location>
    <ligand>
        <name>S-adenosyl-L-methionine</name>
        <dbReference type="ChEBI" id="CHEBI:59789"/>
    </ligand>
</feature>
<feature type="binding site" evidence="1">
    <location>
        <position position="55"/>
    </location>
    <ligand>
        <name>S-adenosyl-L-methionine</name>
        <dbReference type="ChEBI" id="CHEBI:59789"/>
    </ligand>
</feature>
<feature type="binding site" evidence="1">
    <location>
        <position position="80"/>
    </location>
    <ligand>
        <name>S-adenosyl-L-methionine</name>
        <dbReference type="ChEBI" id="CHEBI:59789"/>
    </ligand>
</feature>
<feature type="binding site" evidence="1">
    <location>
        <position position="102"/>
    </location>
    <ligand>
        <name>S-adenosyl-L-methionine</name>
        <dbReference type="ChEBI" id="CHEBI:59789"/>
    </ligand>
</feature>
<feature type="binding site" evidence="1">
    <location>
        <position position="109"/>
    </location>
    <ligand>
        <name>S-adenosyl-L-methionine</name>
        <dbReference type="ChEBI" id="CHEBI:59789"/>
    </ligand>
</feature>
<evidence type="ECO:0000255" key="1">
    <source>
        <dbReference type="HAMAP-Rule" id="MF_01007"/>
    </source>
</evidence>
<gene>
    <name evidence="1" type="primary">rsmH</name>
    <name type="synonym">mraW</name>
    <name type="ordered locus">Shew185_0393</name>
</gene>
<name>RSMH_SHEB8</name>
<accession>A6WIC3</accession>
<comment type="function">
    <text evidence="1">Specifically methylates the N4 position of cytidine in position 1402 (C1402) of 16S rRNA.</text>
</comment>
<comment type="catalytic activity">
    <reaction evidence="1">
        <text>cytidine(1402) in 16S rRNA + S-adenosyl-L-methionine = N(4)-methylcytidine(1402) in 16S rRNA + S-adenosyl-L-homocysteine + H(+)</text>
        <dbReference type="Rhea" id="RHEA:42928"/>
        <dbReference type="Rhea" id="RHEA-COMP:10286"/>
        <dbReference type="Rhea" id="RHEA-COMP:10287"/>
        <dbReference type="ChEBI" id="CHEBI:15378"/>
        <dbReference type="ChEBI" id="CHEBI:57856"/>
        <dbReference type="ChEBI" id="CHEBI:59789"/>
        <dbReference type="ChEBI" id="CHEBI:74506"/>
        <dbReference type="ChEBI" id="CHEBI:82748"/>
        <dbReference type="EC" id="2.1.1.199"/>
    </reaction>
</comment>
<comment type="subcellular location">
    <subcellularLocation>
        <location evidence="1">Cytoplasm</location>
    </subcellularLocation>
</comment>
<comment type="similarity">
    <text evidence="1">Belongs to the methyltransferase superfamily. RsmH family.</text>
</comment>